<evidence type="ECO:0000250" key="1">
    <source>
        <dbReference type="UniProtKB" id="D6WI29"/>
    </source>
</evidence>
<evidence type="ECO:0000250" key="2">
    <source>
        <dbReference type="UniProtKB" id="Q8N884"/>
    </source>
</evidence>
<evidence type="ECO:0000269" key="3">
    <source>
    </source>
</evidence>
<evidence type="ECO:0000303" key="4">
    <source>
    </source>
</evidence>
<evidence type="ECO:0000305" key="5"/>
<protein>
    <recommendedName>
        <fullName evidence="5">Cyclic GMP-AMP synthase-like receptor</fullName>
        <shortName evidence="4">Nves-cGLR</shortName>
        <ecNumber evidence="3">2.7.7.86</ecNumber>
    </recommendedName>
</protein>
<feature type="chain" id="PRO_0000460022" description="Cyclic GMP-AMP synthase-like receptor">
    <location>
        <begin position="1"/>
        <end position="353"/>
    </location>
</feature>
<feature type="binding site" evidence="2">
    <location>
        <position position="60"/>
    </location>
    <ligand>
        <name>ATP</name>
        <dbReference type="ChEBI" id="CHEBI:30616"/>
    </ligand>
</feature>
<feature type="binding site" evidence="2">
    <location>
        <begin position="72"/>
        <end position="74"/>
    </location>
    <ligand>
        <name>ATP</name>
        <dbReference type="ChEBI" id="CHEBI:30616"/>
    </ligand>
</feature>
<feature type="binding site" evidence="2">
    <location>
        <position position="72"/>
    </location>
    <ligand>
        <name>Mg(2+)</name>
        <dbReference type="ChEBI" id="CHEBI:18420"/>
        <note>catalytic</note>
    </ligand>
</feature>
<feature type="binding site" evidence="2">
    <location>
        <position position="74"/>
    </location>
    <ligand>
        <name>Mg(2+)</name>
        <dbReference type="ChEBI" id="CHEBI:18420"/>
        <note>catalytic</note>
    </ligand>
</feature>
<feature type="binding site" evidence="2">
    <location>
        <position position="183"/>
    </location>
    <ligand>
        <name>GTP</name>
        <dbReference type="ChEBI" id="CHEBI:37565"/>
    </ligand>
</feature>
<feature type="binding site" evidence="2">
    <location>
        <position position="183"/>
    </location>
    <ligand>
        <name>Mg(2+)</name>
        <dbReference type="ChEBI" id="CHEBI:18420"/>
        <note>catalytic</note>
    </ligand>
</feature>
<feature type="binding site" evidence="2">
    <location>
        <position position="245"/>
    </location>
    <ligand>
        <name>ATP</name>
        <dbReference type="ChEBI" id="CHEBI:30616"/>
    </ligand>
</feature>
<feature type="binding site" evidence="1">
    <location>
        <position position="269"/>
    </location>
    <ligand>
        <name>Mn(2+)</name>
        <dbReference type="ChEBI" id="CHEBI:29035"/>
    </ligand>
</feature>
<feature type="binding site" evidence="1">
    <location>
        <position position="270"/>
    </location>
    <ligand>
        <name>Mn(2+)</name>
        <dbReference type="ChEBI" id="CHEBI:29035"/>
    </ligand>
</feature>
<dbReference type="EC" id="2.7.7.86" evidence="3"/>
<dbReference type="EMBL" id="LJCH01000001">
    <property type="status" value="NOT_ANNOTATED_CDS"/>
    <property type="molecule type" value="Genomic_DNA"/>
</dbReference>
<dbReference type="SMR" id="P0DXB7"/>
<dbReference type="KEGG" id="nvl:108568334"/>
<dbReference type="Proteomes" id="UP000695000">
    <property type="component" value="Unplaced"/>
</dbReference>
<dbReference type="GO" id="GO:0061501">
    <property type="term" value="F:2',3'-cyclic GMP-AMP synthase activity"/>
    <property type="evidence" value="ECO:0000314"/>
    <property type="project" value="UniProtKB"/>
</dbReference>
<dbReference type="GO" id="GO:0005524">
    <property type="term" value="F:ATP binding"/>
    <property type="evidence" value="ECO:0007669"/>
    <property type="project" value="UniProtKB-KW"/>
</dbReference>
<dbReference type="GO" id="GO:0003690">
    <property type="term" value="F:double-stranded DNA binding"/>
    <property type="evidence" value="ECO:0000314"/>
    <property type="project" value="UniProtKB"/>
</dbReference>
<dbReference type="GO" id="GO:0005525">
    <property type="term" value="F:GTP binding"/>
    <property type="evidence" value="ECO:0007669"/>
    <property type="project" value="UniProtKB-KW"/>
</dbReference>
<dbReference type="GO" id="GO:0046872">
    <property type="term" value="F:metal ion binding"/>
    <property type="evidence" value="ECO:0007669"/>
    <property type="project" value="UniProtKB-KW"/>
</dbReference>
<dbReference type="GO" id="GO:0003723">
    <property type="term" value="F:RNA binding"/>
    <property type="evidence" value="ECO:0007669"/>
    <property type="project" value="UniProtKB-KW"/>
</dbReference>
<dbReference type="GO" id="GO:0045087">
    <property type="term" value="P:innate immune response"/>
    <property type="evidence" value="ECO:0007669"/>
    <property type="project" value="UniProtKB-KW"/>
</dbReference>
<dbReference type="Gene3D" id="1.10.1410.40">
    <property type="match status" value="1"/>
</dbReference>
<dbReference type="Gene3D" id="3.30.460.90">
    <property type="match status" value="1"/>
</dbReference>
<dbReference type="InterPro" id="IPR046903">
    <property type="entry name" value="Mab-21-like_nuc_Trfase"/>
</dbReference>
<dbReference type="InterPro" id="IPR046906">
    <property type="entry name" value="Mab-21_HhH/H2TH-like"/>
</dbReference>
<dbReference type="InterPro" id="IPR024810">
    <property type="entry name" value="MAB21L/cGLR"/>
</dbReference>
<dbReference type="PANTHER" id="PTHR10656">
    <property type="entry name" value="CELL FATE DETERMINING PROTEIN MAB21-RELATED"/>
    <property type="match status" value="1"/>
</dbReference>
<dbReference type="PANTHER" id="PTHR10656:SF42">
    <property type="entry name" value="CYCLIC GMP-AMP SYNTHASE-LIKE PROTEIN-RELATED"/>
    <property type="match status" value="1"/>
</dbReference>
<dbReference type="Pfam" id="PF03281">
    <property type="entry name" value="Mab-21"/>
    <property type="match status" value="1"/>
</dbReference>
<dbReference type="Pfam" id="PF20266">
    <property type="entry name" value="Mab-21_C"/>
    <property type="match status" value="1"/>
</dbReference>
<dbReference type="SMART" id="SM01265">
    <property type="entry name" value="Mab-21"/>
    <property type="match status" value="1"/>
</dbReference>
<organism>
    <name type="scientific">Nicrophorus vespilloides</name>
    <name type="common">Boreal carrion beetle</name>
    <dbReference type="NCBI Taxonomy" id="110193"/>
    <lineage>
        <taxon>Eukaryota</taxon>
        <taxon>Metazoa</taxon>
        <taxon>Ecdysozoa</taxon>
        <taxon>Arthropoda</taxon>
        <taxon>Hexapoda</taxon>
        <taxon>Insecta</taxon>
        <taxon>Pterygota</taxon>
        <taxon>Neoptera</taxon>
        <taxon>Endopterygota</taxon>
        <taxon>Coleoptera</taxon>
        <taxon>Polyphaga</taxon>
        <taxon>Staphyliniformia</taxon>
        <taxon>Silphidae</taxon>
        <taxon>Nicrophorinae</taxon>
        <taxon>Nicrophorus</taxon>
    </lineage>
</organism>
<reference key="1">
    <citation type="submission" date="2015-08" db="EMBL/GenBank/DDBJ databases">
        <title>The Nicrophorus vespilloides genome and methylome, a beetle with complex social behavior.</title>
        <authorList>
            <person name="Cunningham C.B."/>
            <person name="Li L."/>
            <person name="Wiberg R.A."/>
            <person name="Shelton J.M."/>
            <person name="Mckinney E.C."/>
            <person name="Parker D.J."/>
            <person name="Meagher R.B."/>
            <person name="Benowitz K.M."/>
            <person name="Roy-Zokan E.M."/>
            <person name="Ritchie M.G."/>
            <person name="Brown S.J."/>
            <person name="Schmitz R.B."/>
            <person name="Moore A.J."/>
        </authorList>
    </citation>
    <scope>NUCLEOTIDE SEQUENCE [LARGE SCALE GENOMIC DNA]</scope>
</reference>
<reference key="2">
    <citation type="journal article" date="2023" name="Cell">
        <title>cGLRs are a diverse family of pattern recognition receptors in innate immunity.</title>
        <authorList>
            <person name="Li Y."/>
            <person name="Slavik K.M."/>
            <person name="Toyoda H.C."/>
            <person name="Morehouse B.R."/>
            <person name="de Oliveira Mann C.C."/>
            <person name="Elek A."/>
            <person name="Levy S."/>
            <person name="Wang Z."/>
            <person name="Mears K.S."/>
            <person name="Liu J."/>
            <person name="Kashin D."/>
            <person name="Guo X."/>
            <person name="Mass T."/>
            <person name="Sebe-Pedros A."/>
            <person name="Schwede F."/>
            <person name="Kranzusch P.J."/>
        </authorList>
    </citation>
    <scope>FUNCTION</scope>
    <scope>CATALYTIC ACTIVITY</scope>
</reference>
<sequence length="353" mass="41388">MEYSWLENKLQEINRKCIQINNKKSNNDSLNMIIGKLIDVMKDTSVLFKTLYERIIFNGSYYNNLKISKADEYDLDLILVLPVALETVLMLTPEAGYVDVKIDISKIKKLAYYRDILTPLEKLCENGIFSSLKIHSWFEGLVQKSLNIINASKYFPQYKLDMYKSGPAVTLTVHTPFSSYDMDLVPCLKLDKSLYPKGYKKQNCNHIYAVSKPNKDKEWRLSFIEQELSILRDNGHVKPAIRLLKFLRDQRDHKLIKSYFIVTVAMWDLETTNFNGKSLSFAFMTLLESLYKHICERKIPFYWNPNLNLLNKCHRDYLFNLENQLLNILKKLRSSNSNPNVLNEVFNFDIQES</sequence>
<name>CGLR_NICVS</name>
<gene>
    <name evidence="4" type="primary">cGLR</name>
</gene>
<proteinExistence type="evidence at protein level"/>
<accession>P0DXB7</accession>
<comment type="function">
    <text evidence="3">Nucleotidyltransferase that catalyzes the formation of cyclic GMP-AMP (2',3'-cGAMP) from ATP and GTP and plays a key role in innate immunity (PubMed:37379839). Acts as a key sensor of double-stranded RNA (dsRNA), the presence of dsRNA in the cytoplasm being a danger signal that triggers the immune responses (PubMed:37379839). Directly binds dsRNA, activating the nucleotidyltransferase activity, leading to synthesis of 2',3'-cGAMP, a second messenger that binds to and activates Sting, thereby triggering the immune response via activation of the NF-kappa-B transcription factor (PubMed:37379839).</text>
</comment>
<comment type="catalytic activity">
    <reaction evidence="3">
        <text>GTP + ATP = 2',3'-cGAMP + 2 diphosphate</text>
        <dbReference type="Rhea" id="RHEA:42064"/>
        <dbReference type="ChEBI" id="CHEBI:30616"/>
        <dbReference type="ChEBI" id="CHEBI:33019"/>
        <dbReference type="ChEBI" id="CHEBI:37565"/>
        <dbReference type="ChEBI" id="CHEBI:143093"/>
        <dbReference type="EC" id="2.7.7.86"/>
    </reaction>
    <physiologicalReaction direction="left-to-right" evidence="3">
        <dbReference type="Rhea" id="RHEA:42065"/>
    </physiologicalReaction>
</comment>
<comment type="catalytic activity">
    <reaction evidence="3">
        <text>GTP + ATP = pppGp(2'-5')A + diphosphate</text>
        <dbReference type="Rhea" id="RHEA:23748"/>
        <dbReference type="ChEBI" id="CHEBI:30616"/>
        <dbReference type="ChEBI" id="CHEBI:33019"/>
        <dbReference type="ChEBI" id="CHEBI:37565"/>
        <dbReference type="ChEBI" id="CHEBI:78318"/>
    </reaction>
    <physiologicalReaction direction="left-to-right" evidence="3">
        <dbReference type="Rhea" id="RHEA:23749"/>
    </physiologicalReaction>
</comment>
<comment type="catalytic activity">
    <reaction evidence="3">
        <text>pppGp(2'-5')A = 2',3'-cGAMP + diphosphate</text>
        <dbReference type="Rhea" id="RHEA:23924"/>
        <dbReference type="ChEBI" id="CHEBI:33019"/>
        <dbReference type="ChEBI" id="CHEBI:78318"/>
        <dbReference type="ChEBI" id="CHEBI:143093"/>
    </reaction>
    <physiologicalReaction direction="left-to-right" evidence="3">
        <dbReference type="Rhea" id="RHEA:23925"/>
    </physiologicalReaction>
</comment>
<comment type="cofactor">
    <cofactor evidence="1">
        <name>Mg(2+)</name>
        <dbReference type="ChEBI" id="CHEBI:18420"/>
    </cofactor>
    <cofactor evidence="1">
        <name>Mn(2+)</name>
        <dbReference type="ChEBI" id="CHEBI:29035"/>
    </cofactor>
</comment>
<comment type="similarity">
    <text evidence="5">Belongs to the mab-21 family.</text>
</comment>
<keyword id="KW-0067">ATP-binding</keyword>
<keyword id="KW-0342">GTP-binding</keyword>
<keyword id="KW-0391">Immunity</keyword>
<keyword id="KW-0399">Innate immunity</keyword>
<keyword id="KW-0460">Magnesium</keyword>
<keyword id="KW-0464">Manganese</keyword>
<keyword id="KW-0479">Metal-binding</keyword>
<keyword id="KW-0547">Nucleotide-binding</keyword>
<keyword id="KW-0548">Nucleotidyltransferase</keyword>
<keyword id="KW-0694">RNA-binding</keyword>
<keyword id="KW-0808">Transferase</keyword>